<organism>
    <name type="scientific">Dictyostelium discoideum</name>
    <name type="common">Social amoeba</name>
    <dbReference type="NCBI Taxonomy" id="44689"/>
    <lineage>
        <taxon>Eukaryota</taxon>
        <taxon>Amoebozoa</taxon>
        <taxon>Evosea</taxon>
        <taxon>Eumycetozoa</taxon>
        <taxon>Dictyostelia</taxon>
        <taxon>Dictyosteliales</taxon>
        <taxon>Dictyosteliaceae</taxon>
        <taxon>Dictyostelium</taxon>
    </lineage>
</organism>
<evidence type="ECO:0000269" key="1">
    <source>
    </source>
</evidence>
<evidence type="ECO:0000269" key="2">
    <source>
    </source>
</evidence>
<evidence type="ECO:0000305" key="3"/>
<reference key="1">
    <citation type="journal article" date="2006" name="J. Biol. Chem.">
        <title>Molecular characterization of a novel UDP-galactose:fucoside alpha3-galactosyltransferase that modifies Skp1 in the cytoplasm of Dictyostelium.</title>
        <authorList>
            <person name="Ercan A."/>
            <person name="Panico M."/>
            <person name="Sutton-Smith M."/>
            <person name="Dell A."/>
            <person name="Morris H.R."/>
            <person name="Matta K.L."/>
            <person name="Gay D.F."/>
            <person name="West C.M."/>
        </authorList>
    </citation>
    <scope>NUCLEOTIDE SEQUENCE [GENOMIC DNA]</scope>
    <scope>PROTEIN SEQUENCE OF 95-100; 246-251; 336-343; 352-357; 390-397 AND 492-499</scope>
    <scope>FUNCTION</scope>
    <scope>DOMAIN</scope>
    <scope>DISRUPTION PHENOTYPE</scope>
    <source>
        <strain>AX3</strain>
    </source>
</reference>
<reference key="2">
    <citation type="journal article" date="2005" name="Nature">
        <title>The genome of the social amoeba Dictyostelium discoideum.</title>
        <authorList>
            <person name="Eichinger L."/>
            <person name="Pachebat J.A."/>
            <person name="Gloeckner G."/>
            <person name="Rajandream M.A."/>
            <person name="Sucgang R."/>
            <person name="Berriman M."/>
            <person name="Song J."/>
            <person name="Olsen R."/>
            <person name="Szafranski K."/>
            <person name="Xu Q."/>
            <person name="Tunggal B."/>
            <person name="Kummerfeld S."/>
            <person name="Madera M."/>
            <person name="Konfortov B.A."/>
            <person name="Rivero F."/>
            <person name="Bankier A.T."/>
            <person name="Lehmann R."/>
            <person name="Hamlin N."/>
            <person name="Davies R."/>
            <person name="Gaudet P."/>
            <person name="Fey P."/>
            <person name="Pilcher K."/>
            <person name="Chen G."/>
            <person name="Saunders D."/>
            <person name="Sodergren E.J."/>
            <person name="Davis P."/>
            <person name="Kerhornou A."/>
            <person name="Nie X."/>
            <person name="Hall N."/>
            <person name="Anjard C."/>
            <person name="Hemphill L."/>
            <person name="Bason N."/>
            <person name="Farbrother P."/>
            <person name="Desany B."/>
            <person name="Just E."/>
            <person name="Morio T."/>
            <person name="Rost R."/>
            <person name="Churcher C.M."/>
            <person name="Cooper J."/>
            <person name="Haydock S."/>
            <person name="van Driessche N."/>
            <person name="Cronin A."/>
            <person name="Goodhead I."/>
            <person name="Muzny D.M."/>
            <person name="Mourier T."/>
            <person name="Pain A."/>
            <person name="Lu M."/>
            <person name="Harper D."/>
            <person name="Lindsay R."/>
            <person name="Hauser H."/>
            <person name="James K.D."/>
            <person name="Quiles M."/>
            <person name="Madan Babu M."/>
            <person name="Saito T."/>
            <person name="Buchrieser C."/>
            <person name="Wardroper A."/>
            <person name="Felder M."/>
            <person name="Thangavelu M."/>
            <person name="Johnson D."/>
            <person name="Knights A."/>
            <person name="Loulseged H."/>
            <person name="Mungall K.L."/>
            <person name="Oliver K."/>
            <person name="Price C."/>
            <person name="Quail M.A."/>
            <person name="Urushihara H."/>
            <person name="Hernandez J."/>
            <person name="Rabbinowitsch E."/>
            <person name="Steffen D."/>
            <person name="Sanders M."/>
            <person name="Ma J."/>
            <person name="Kohara Y."/>
            <person name="Sharp S."/>
            <person name="Simmonds M.N."/>
            <person name="Spiegler S."/>
            <person name="Tivey A."/>
            <person name="Sugano S."/>
            <person name="White B."/>
            <person name="Walker D."/>
            <person name="Woodward J.R."/>
            <person name="Winckler T."/>
            <person name="Tanaka Y."/>
            <person name="Shaulsky G."/>
            <person name="Schleicher M."/>
            <person name="Weinstock G.M."/>
            <person name="Rosenthal A."/>
            <person name="Cox E.C."/>
            <person name="Chisholm R.L."/>
            <person name="Gibbs R.A."/>
            <person name="Loomis W.F."/>
            <person name="Platzer M."/>
            <person name="Kay R.R."/>
            <person name="Williams J.G."/>
            <person name="Dear P.H."/>
            <person name="Noegel A.A."/>
            <person name="Barrell B.G."/>
            <person name="Kuspa A."/>
        </authorList>
    </citation>
    <scope>NUCLEOTIDE SEQUENCE [LARGE SCALE GENOMIC DNA]</scope>
    <source>
        <strain>AX4</strain>
    </source>
</reference>
<reference key="3">
    <citation type="journal article" date="2004" name="J. Biol. Chem.">
        <title>Specificity of a soluble UDP-galactose:fucoside alpha1,3-galactosyltransferase that modifies the cytoplasmic glycoprotein Skp1 in Dictyostelium.</title>
        <authorList>
            <person name="Ketcham C."/>
            <person name="Wang F."/>
            <person name="Fisher S.Z."/>
            <person name="Ercan A."/>
            <person name="van der Wel H."/>
            <person name="Locke R.D."/>
            <person name="Sirajud-Doulah K."/>
            <person name="Matta K.L."/>
            <person name="West C.M."/>
        </authorList>
    </citation>
    <scope>FUNCTION</scope>
    <scope>CATALYTIC ACTIVITY</scope>
    <scope>COFACTOR</scope>
    <scope>ACTIVITY REGULATION</scope>
    <scope>SUBSTRATE SPECIFICITY</scope>
    <scope>BIOPHYSICOCHEMICAL PROPERTIES</scope>
    <scope>SUBCELLULAR LOCATION</scope>
    <source>
        <strain>AX3</strain>
    </source>
</reference>
<dbReference type="EC" id="2.4.1.37"/>
<dbReference type="EMBL" id="DQ340632">
    <property type="protein sequence ID" value="ABC67744.1"/>
    <property type="molecule type" value="Genomic_DNA"/>
</dbReference>
<dbReference type="EMBL" id="AAFI02000049">
    <property type="protein sequence ID" value="EAL65946.1"/>
    <property type="molecule type" value="Genomic_DNA"/>
</dbReference>
<dbReference type="RefSeq" id="XP_639311.1">
    <property type="nucleotide sequence ID" value="XM_634219.1"/>
</dbReference>
<dbReference type="SMR" id="Q54RP0"/>
<dbReference type="BioGRID" id="1248885">
    <property type="interactions" value="1"/>
</dbReference>
<dbReference type="FunCoup" id="Q54RP0">
    <property type="interactions" value="130"/>
</dbReference>
<dbReference type="STRING" id="44689.Q54RP0"/>
<dbReference type="CAZy" id="GT77">
    <property type="family name" value="Glycosyltransferase Family 77"/>
</dbReference>
<dbReference type="PaxDb" id="44689-DDB0231341"/>
<dbReference type="EnsemblProtists" id="EAL65946">
    <property type="protein sequence ID" value="EAL65946"/>
    <property type="gene ID" value="DDB_G0283005"/>
</dbReference>
<dbReference type="GeneID" id="8623882"/>
<dbReference type="KEGG" id="ddi:DDB_G0283005"/>
<dbReference type="dictyBase" id="DDB_G0283005">
    <property type="gene designation" value="agtA"/>
</dbReference>
<dbReference type="VEuPathDB" id="AmoebaDB:DDB_G0283005"/>
<dbReference type="eggNOG" id="KOG0263">
    <property type="taxonomic scope" value="Eukaryota"/>
</dbReference>
<dbReference type="HOGENOM" id="CLU_423026_0_0_1"/>
<dbReference type="InParanoid" id="Q54RP0"/>
<dbReference type="OMA" id="AICNEKP"/>
<dbReference type="PhylomeDB" id="Q54RP0"/>
<dbReference type="SABIO-RK" id="Q54RP0"/>
<dbReference type="UniPathway" id="UPA00378"/>
<dbReference type="PRO" id="PR:Q54RP0"/>
<dbReference type="Proteomes" id="UP000002195">
    <property type="component" value="Chromosome 4"/>
</dbReference>
<dbReference type="GO" id="GO:0005737">
    <property type="term" value="C:cytoplasm"/>
    <property type="evidence" value="ECO:0000314"/>
    <property type="project" value="dictyBase"/>
</dbReference>
<dbReference type="GO" id="GO:0004381">
    <property type="term" value="F:fucosylgalactoside 3-alpha-galactosyltransferase activity"/>
    <property type="evidence" value="ECO:0000314"/>
    <property type="project" value="dictyBase"/>
</dbReference>
<dbReference type="GO" id="GO:0031154">
    <property type="term" value="P:culmination involved in sorocarp development"/>
    <property type="evidence" value="ECO:0000315"/>
    <property type="project" value="dictyBase"/>
</dbReference>
<dbReference type="GO" id="GO:0043687">
    <property type="term" value="P:post-translational protein modification"/>
    <property type="evidence" value="ECO:0000314"/>
    <property type="project" value="dictyBase"/>
</dbReference>
<dbReference type="GO" id="GO:0006486">
    <property type="term" value="P:protein glycosylation"/>
    <property type="evidence" value="ECO:0007669"/>
    <property type="project" value="UniProtKB-UniPathway"/>
</dbReference>
<dbReference type="GO" id="GO:0010265">
    <property type="term" value="P:SCF complex assembly"/>
    <property type="evidence" value="ECO:0000314"/>
    <property type="project" value="dictyBase"/>
</dbReference>
<dbReference type="CDD" id="cd00200">
    <property type="entry name" value="WD40"/>
    <property type="match status" value="1"/>
</dbReference>
<dbReference type="Gene3D" id="2.130.10.10">
    <property type="entry name" value="YVTN repeat-like/Quinoprotein amine dehydrogenase"/>
    <property type="match status" value="3"/>
</dbReference>
<dbReference type="InterPro" id="IPR020472">
    <property type="entry name" value="G-protein_beta_WD-40_rep"/>
</dbReference>
<dbReference type="InterPro" id="IPR005069">
    <property type="entry name" value="Nucl-diP-sugar_transferase"/>
</dbReference>
<dbReference type="InterPro" id="IPR050995">
    <property type="entry name" value="WD-F-box_domain-protein"/>
</dbReference>
<dbReference type="InterPro" id="IPR015943">
    <property type="entry name" value="WD40/YVTN_repeat-like_dom_sf"/>
</dbReference>
<dbReference type="InterPro" id="IPR019775">
    <property type="entry name" value="WD40_repeat_CS"/>
</dbReference>
<dbReference type="InterPro" id="IPR036322">
    <property type="entry name" value="WD40_repeat_dom_sf"/>
</dbReference>
<dbReference type="InterPro" id="IPR001680">
    <property type="entry name" value="WD40_rpt"/>
</dbReference>
<dbReference type="PANTHER" id="PTHR14604:SF4">
    <property type="entry name" value="F-BOX DOMAIN-CONTAINING PROTEIN"/>
    <property type="match status" value="1"/>
</dbReference>
<dbReference type="PANTHER" id="PTHR14604">
    <property type="entry name" value="WD40 REPEAT PF20"/>
    <property type="match status" value="1"/>
</dbReference>
<dbReference type="Pfam" id="PF03407">
    <property type="entry name" value="Nucleotid_trans"/>
    <property type="match status" value="1"/>
</dbReference>
<dbReference type="Pfam" id="PF00400">
    <property type="entry name" value="WD40"/>
    <property type="match status" value="5"/>
</dbReference>
<dbReference type="PRINTS" id="PR00320">
    <property type="entry name" value="GPROTEINBRPT"/>
</dbReference>
<dbReference type="SMART" id="SM00320">
    <property type="entry name" value="WD40"/>
    <property type="match status" value="7"/>
</dbReference>
<dbReference type="SUPFAM" id="SSF50978">
    <property type="entry name" value="WD40 repeat-like"/>
    <property type="match status" value="1"/>
</dbReference>
<dbReference type="PROSITE" id="PS00678">
    <property type="entry name" value="WD_REPEATS_1"/>
    <property type="match status" value="2"/>
</dbReference>
<dbReference type="PROSITE" id="PS50082">
    <property type="entry name" value="WD_REPEATS_2"/>
    <property type="match status" value="5"/>
</dbReference>
<dbReference type="PROSITE" id="PS50294">
    <property type="entry name" value="WD_REPEATS_REGION"/>
    <property type="match status" value="1"/>
</dbReference>
<accession>Q54RP0</accession>
<accession>Q2LAG6</accession>
<feature type="chain" id="PRO_0000328554" description="UDP-galactose:fucoside alpha-3-galactosyltransferase">
    <location>
        <begin position="1"/>
        <end position="648"/>
    </location>
</feature>
<feature type="repeat" description="WD 1">
    <location>
        <begin position="320"/>
        <end position="358"/>
    </location>
</feature>
<feature type="repeat" description="WD 2">
    <location>
        <begin position="372"/>
        <end position="420"/>
    </location>
</feature>
<feature type="repeat" description="WD 3">
    <location>
        <begin position="422"/>
        <end position="461"/>
    </location>
</feature>
<feature type="repeat" description="WD 4">
    <location>
        <begin position="464"/>
        <end position="505"/>
    </location>
</feature>
<feature type="repeat" description="WD 5">
    <location>
        <begin position="507"/>
        <end position="546"/>
    </location>
</feature>
<feature type="repeat" description="WD 6">
    <location>
        <begin position="556"/>
        <end position="595"/>
    </location>
</feature>
<feature type="repeat" description="WD 7">
    <location>
        <begin position="617"/>
        <end position="648"/>
    </location>
</feature>
<sequence>MEKKVEYIKENDKIVLMCNYGFRDMTLNLLKCFEKLSIDKSRYILYCMDDKAYQFFAEFKGIECQRFSRDDIINSSTSSTQLFHDNNTNDNKGIYSENAESYGDIGFRAICNEKPLVVLDVLKKGYNVLWTDTDIVWKRDPFIHFYQDINQENQFTNDDDIDLYVQQDDDDICAGFYFIRSNQRTIKFIQDSINFLNPCIDDQIAMRLFLKSQGINIKSKNILLSLSENDKKDKIRYRLLDKKLFPNGTNYFNLKITQRDNITPFIIHNNCIIGHRSKKDRFIEYGLWYINDDEIDINSNINNDDENNKEIKLFKNVLKNHTDIITSINSSDDGKLFTTSIDKSIKIWKFENTSGNDTDNGIFKVLKSKYIHKRGGIWSTFIFSSNNNNNNDYGFENLLTSSHDKTIQYWDNNLQVIQTFIGHTGIINQLIVIPNSSYFFTCSDDNTIRQFDLNNINFKRVFIGHNGWVSSIAINKNLNTLYSCSNDGTIRFWDINSGRCLNIIKGNQGGWIRKIIYNDNLNQLISGGNDGTIKIWSCDNLNNFNDNQYLLKINTNENSSINDLQFDSDTNLIYCAFENGSLKSFKLTSNNNNNNNNNNNNNNNTINYSLDKVYQGHLNSSINCIHISKSLNLLFSGGFDKQIKSWDL</sequence>
<keyword id="KW-0963">Cytoplasm</keyword>
<keyword id="KW-0903">Direct protein sequencing</keyword>
<keyword id="KW-0328">Glycosyltransferase</keyword>
<keyword id="KW-0460">Magnesium</keyword>
<keyword id="KW-0464">Manganese</keyword>
<keyword id="KW-1185">Reference proteome</keyword>
<keyword id="KW-0677">Repeat</keyword>
<keyword id="KW-0808">Transferase</keyword>
<keyword id="KW-0853">WD repeat</keyword>
<protein>
    <recommendedName>
        <fullName>UDP-galactose:fucoside alpha-3-galactosyltransferase</fullName>
        <ecNumber>2.4.1.37</ecNumber>
    </recommendedName>
    <alternativeName>
        <fullName>Alpha-GalT1</fullName>
    </alternativeName>
    <alternativeName>
        <fullName>Fucosylgalactoside 3-alpha-galactosyltransferase</fullName>
    </alternativeName>
    <alternativeName>
        <fullName>Skp1 alpha-3-galactosyltransferase</fullName>
    </alternativeName>
</protein>
<name>AGTA_DICDI</name>
<proteinExistence type="evidence at protein level"/>
<gene>
    <name type="primary">agtA</name>
    <name type="synonym">GT78</name>
    <name type="ORF">DDB_G0283005</name>
</gene>
<comment type="function">
    <text evidence="1 2">Specifically catalyzes the transfer of a galactosyl residue to the hydroxyproline-linked saccharide on Skp1 protein (fpaA/fpaB). Catalyzes the formation of a Gal-alpha-1,3-Fuc linkage, leading to Gal-Fuc-Gal-GlcNAc-HyPro143-Skp1.</text>
</comment>
<comment type="catalytic activity">
    <reaction evidence="1">
        <text>an alpha-L-fucosyl-(1-&gt;2)-beta-D-galactosyl derivative + UDP-alpha-D-galactose = an alpha-D-galactosyl-(1-&gt;3)-[alpha-L-fucosyl-(1-&gt;2)]-beta-D-galactosyl derivative + UDP + H(+)</text>
        <dbReference type="Rhea" id="RHEA:14349"/>
        <dbReference type="ChEBI" id="CHEBI:15378"/>
        <dbReference type="ChEBI" id="CHEBI:58223"/>
        <dbReference type="ChEBI" id="CHEBI:66914"/>
        <dbReference type="ChEBI" id="CHEBI:140327"/>
        <dbReference type="ChEBI" id="CHEBI:140328"/>
        <dbReference type="EC" id="2.4.1.37"/>
    </reaction>
</comment>
<comment type="cofactor">
    <cofactor evidence="1">
        <name>Mn(2+)</name>
        <dbReference type="ChEBI" id="CHEBI:29035"/>
    </cofactor>
    <text evidence="1">Divalent metal cations. Mn(2+) is 4-fold better than Mg(2+).</text>
</comment>
<comment type="activity regulation">
    <text evidence="1">Stimulated by dithiothreitol (DTT) in vitro. Totally inhibited by EDTA.</text>
</comment>
<comment type="biophysicochemical properties">
    <kinetics>
        <KM evidence="1">3.5 uM for UDP-Gal</KM>
        <KM evidence="1">3.8 mM for Fuc-alpha-1-Bn</KM>
        <KM evidence="1">0.84 mM for Fuc-alpha-1,2-Gal-beta-1-Bn</KM>
        <KM evidence="1">0.82 mM for Fuc-alpha-1,2-Gal-beta-1-pNP</KM>
        <KM evidence="1">0.006 mM for Fuc-alpha-1,2-Gal-beta-1,3-GlcNAc-alpha-1-Skp1</KM>
        <text>The catalytic efficiency with the presumed natural substrate Fuc-alpha-1,2-Gal-beta-1,3-GlcNAc-alpha-1-Skp1 is 21-fold and 21000-fold higher than that of the synthetic substrates Fuc-alpha-1,2-Gal-beta-1-pNP and Fuc-alpha-1-Bn, respectively.</text>
    </kinetics>
    <phDependence>
        <text evidence="1">Optimum pH is 6.4-7.4.</text>
    </phDependence>
    <temperatureDependence>
        <text evidence="1">Optimum temperature is 37 degrees Celsius.</text>
    </temperatureDependence>
</comment>
<comment type="pathway">
    <text>Protein modification; protein glycosylation.</text>
</comment>
<comment type="subcellular location">
    <subcellularLocation>
        <location evidence="1">Cytoplasm</location>
    </subcellularLocation>
</comment>
<comment type="domain">
    <text evidence="2">Consists of two domains: an N-terminal catalytic domain and a C-terminal domain, not required for activity, that is predicted to form a beta-propeller-like protein-protein interaction domain.</text>
</comment>
<comment type="disruption phenotype">
    <text evidence="2">Cells show an accumulation of the non-galactosylated isoform of Skp1 in cells.</text>
</comment>
<comment type="miscellaneous">
    <text>Not required for growth.</text>
</comment>
<comment type="similarity">
    <text evidence="3">Belongs to the glycosyltransferase 77 family.</text>
</comment>